<reference key="1">
    <citation type="journal article" date="2006" name="Proc. Natl. Acad. Sci. U.S.A.">
        <title>Comparative genomics of the lactic acid bacteria.</title>
        <authorList>
            <person name="Makarova K.S."/>
            <person name="Slesarev A."/>
            <person name="Wolf Y.I."/>
            <person name="Sorokin A."/>
            <person name="Mirkin B."/>
            <person name="Koonin E.V."/>
            <person name="Pavlov A."/>
            <person name="Pavlova N."/>
            <person name="Karamychev V."/>
            <person name="Polouchine N."/>
            <person name="Shakhova V."/>
            <person name="Grigoriev I."/>
            <person name="Lou Y."/>
            <person name="Rohksar D."/>
            <person name="Lucas S."/>
            <person name="Huang K."/>
            <person name="Goodstein D.M."/>
            <person name="Hawkins T."/>
            <person name="Plengvidhya V."/>
            <person name="Welker D."/>
            <person name="Hughes J."/>
            <person name="Goh Y."/>
            <person name="Benson A."/>
            <person name="Baldwin K."/>
            <person name="Lee J.-H."/>
            <person name="Diaz-Muniz I."/>
            <person name="Dosti B."/>
            <person name="Smeianov V."/>
            <person name="Wechter W."/>
            <person name="Barabote R."/>
            <person name="Lorca G."/>
            <person name="Altermann E."/>
            <person name="Barrangou R."/>
            <person name="Ganesan B."/>
            <person name="Xie Y."/>
            <person name="Rawsthorne H."/>
            <person name="Tamir D."/>
            <person name="Parker C."/>
            <person name="Breidt F."/>
            <person name="Broadbent J.R."/>
            <person name="Hutkins R."/>
            <person name="O'Sullivan D."/>
            <person name="Steele J."/>
            <person name="Unlu G."/>
            <person name="Saier M.H. Jr."/>
            <person name="Klaenhammer T."/>
            <person name="Richardson P."/>
            <person name="Kozyavkin S."/>
            <person name="Weimer B.C."/>
            <person name="Mills D.A."/>
        </authorList>
    </citation>
    <scope>NUCLEOTIDE SEQUENCE [LARGE SCALE GENOMIC DNA]</scope>
    <source>
        <strain>ATCC 33323 / DSM 20243 / BCRC 14619 / CIP 102991 / JCM 1131 / KCTC 3163 / NCIMB 11718 / NCTC 13722 / AM63</strain>
    </source>
</reference>
<sequence length="159" mass="18094">MNIKIVCVGKLKEKYFKDGIAEYVKRMGRFAKVKIIQVPDEKAPEKLSPAEMEQVKEIEGKRILDKIKDKEYVYVTAIKGKERTSEDFAKELADLTTYGHSDITFVIGGSLGTSNAVNKRADDLISFGKFTMPHQLMRLVLVEQIYRAFMINSGSPYHK</sequence>
<evidence type="ECO:0000255" key="1">
    <source>
        <dbReference type="HAMAP-Rule" id="MF_00658"/>
    </source>
</evidence>
<accession>Q046Z0</accession>
<proteinExistence type="inferred from homology"/>
<comment type="function">
    <text evidence="1">Specifically methylates the pseudouridine at position 1915 (m3Psi1915) in 23S rRNA.</text>
</comment>
<comment type="catalytic activity">
    <reaction evidence="1">
        <text>pseudouridine(1915) in 23S rRNA + S-adenosyl-L-methionine = N(3)-methylpseudouridine(1915) in 23S rRNA + S-adenosyl-L-homocysteine + H(+)</text>
        <dbReference type="Rhea" id="RHEA:42752"/>
        <dbReference type="Rhea" id="RHEA-COMP:10221"/>
        <dbReference type="Rhea" id="RHEA-COMP:10222"/>
        <dbReference type="ChEBI" id="CHEBI:15378"/>
        <dbReference type="ChEBI" id="CHEBI:57856"/>
        <dbReference type="ChEBI" id="CHEBI:59789"/>
        <dbReference type="ChEBI" id="CHEBI:65314"/>
        <dbReference type="ChEBI" id="CHEBI:74486"/>
        <dbReference type="EC" id="2.1.1.177"/>
    </reaction>
</comment>
<comment type="subunit">
    <text evidence="1">Homodimer.</text>
</comment>
<comment type="subcellular location">
    <subcellularLocation>
        <location evidence="1">Cytoplasm</location>
    </subcellularLocation>
</comment>
<comment type="similarity">
    <text evidence="1">Belongs to the RNA methyltransferase RlmH family.</text>
</comment>
<feature type="chain" id="PRO_1000061796" description="Ribosomal RNA large subunit methyltransferase H">
    <location>
        <begin position="1"/>
        <end position="159"/>
    </location>
</feature>
<feature type="binding site" evidence="1">
    <location>
        <position position="108"/>
    </location>
    <ligand>
        <name>S-adenosyl-L-methionine</name>
        <dbReference type="ChEBI" id="CHEBI:59789"/>
    </ligand>
</feature>
<name>RLMH_LACGA</name>
<gene>
    <name evidence="1" type="primary">rlmH</name>
    <name type="ordered locus">LGAS_0070</name>
</gene>
<protein>
    <recommendedName>
        <fullName evidence="1">Ribosomal RNA large subunit methyltransferase H</fullName>
        <ecNumber evidence="1">2.1.1.177</ecNumber>
    </recommendedName>
    <alternativeName>
        <fullName evidence="1">23S rRNA (pseudouridine1915-N3)-methyltransferase</fullName>
    </alternativeName>
    <alternativeName>
        <fullName evidence="1">23S rRNA m3Psi1915 methyltransferase</fullName>
    </alternativeName>
    <alternativeName>
        <fullName evidence="1">rRNA (pseudouridine-N3-)-methyltransferase RlmH</fullName>
    </alternativeName>
</protein>
<organism>
    <name type="scientific">Lactobacillus gasseri (strain ATCC 33323 / DSM 20243 / BCRC 14619 / CIP 102991 / JCM 1131 / KCTC 3163 / NCIMB 11718 / NCTC 13722 / AM63)</name>
    <dbReference type="NCBI Taxonomy" id="324831"/>
    <lineage>
        <taxon>Bacteria</taxon>
        <taxon>Bacillati</taxon>
        <taxon>Bacillota</taxon>
        <taxon>Bacilli</taxon>
        <taxon>Lactobacillales</taxon>
        <taxon>Lactobacillaceae</taxon>
        <taxon>Lactobacillus</taxon>
    </lineage>
</organism>
<keyword id="KW-0963">Cytoplasm</keyword>
<keyword id="KW-0489">Methyltransferase</keyword>
<keyword id="KW-0698">rRNA processing</keyword>
<keyword id="KW-0949">S-adenosyl-L-methionine</keyword>
<keyword id="KW-0808">Transferase</keyword>
<dbReference type="EC" id="2.1.1.177" evidence="1"/>
<dbReference type="EMBL" id="CP000413">
    <property type="protein sequence ID" value="ABJ59482.1"/>
    <property type="molecule type" value="Genomic_DNA"/>
</dbReference>
<dbReference type="RefSeq" id="WP_003648006.1">
    <property type="nucleotide sequence ID" value="NZ_WBMG01000001.1"/>
</dbReference>
<dbReference type="SMR" id="Q046Z0"/>
<dbReference type="GeneID" id="29638931"/>
<dbReference type="KEGG" id="lga:LGAS_0070"/>
<dbReference type="HOGENOM" id="CLU_100552_0_0_9"/>
<dbReference type="BioCyc" id="LGAS324831:G1G6Y-69-MONOMER"/>
<dbReference type="Proteomes" id="UP000000664">
    <property type="component" value="Chromosome"/>
</dbReference>
<dbReference type="GO" id="GO:0005737">
    <property type="term" value="C:cytoplasm"/>
    <property type="evidence" value="ECO:0007669"/>
    <property type="project" value="UniProtKB-SubCell"/>
</dbReference>
<dbReference type="GO" id="GO:0070038">
    <property type="term" value="F:rRNA (pseudouridine-N3-)-methyltransferase activity"/>
    <property type="evidence" value="ECO:0007669"/>
    <property type="project" value="UniProtKB-UniRule"/>
</dbReference>
<dbReference type="CDD" id="cd18081">
    <property type="entry name" value="RlmH-like"/>
    <property type="match status" value="1"/>
</dbReference>
<dbReference type="Gene3D" id="3.40.1280.10">
    <property type="match status" value="1"/>
</dbReference>
<dbReference type="HAMAP" id="MF_00658">
    <property type="entry name" value="23SrRNA_methyltr_H"/>
    <property type="match status" value="1"/>
</dbReference>
<dbReference type="InterPro" id="IPR029028">
    <property type="entry name" value="Alpha/beta_knot_MTases"/>
</dbReference>
<dbReference type="InterPro" id="IPR003742">
    <property type="entry name" value="RlmH-like"/>
</dbReference>
<dbReference type="InterPro" id="IPR029026">
    <property type="entry name" value="tRNA_m1G_MTases_N"/>
</dbReference>
<dbReference type="NCBIfam" id="NF000985">
    <property type="entry name" value="PRK00103.1-3"/>
    <property type="match status" value="1"/>
</dbReference>
<dbReference type="NCBIfam" id="TIGR00246">
    <property type="entry name" value="tRNA_RlmH_YbeA"/>
    <property type="match status" value="1"/>
</dbReference>
<dbReference type="PANTHER" id="PTHR33603">
    <property type="entry name" value="METHYLTRANSFERASE"/>
    <property type="match status" value="1"/>
</dbReference>
<dbReference type="PANTHER" id="PTHR33603:SF1">
    <property type="entry name" value="RIBOSOMAL RNA LARGE SUBUNIT METHYLTRANSFERASE H"/>
    <property type="match status" value="1"/>
</dbReference>
<dbReference type="Pfam" id="PF02590">
    <property type="entry name" value="SPOUT_MTase"/>
    <property type="match status" value="1"/>
</dbReference>
<dbReference type="PIRSF" id="PIRSF004505">
    <property type="entry name" value="MT_bac"/>
    <property type="match status" value="1"/>
</dbReference>
<dbReference type="SUPFAM" id="SSF75217">
    <property type="entry name" value="alpha/beta knot"/>
    <property type="match status" value="1"/>
</dbReference>